<gene>
    <name type="ordered locus">Sca_0414</name>
</gene>
<evidence type="ECO:0000255" key="1">
    <source>
        <dbReference type="HAMAP-Rule" id="MF_00636"/>
    </source>
</evidence>
<evidence type="ECO:0000305" key="2"/>
<protein>
    <recommendedName>
        <fullName evidence="1">Nucleotide-binding protein Sca_0414</fullName>
    </recommendedName>
</protein>
<feature type="chain" id="PRO_0000383291" description="Nucleotide-binding protein Sca_0414">
    <location>
        <begin position="1"/>
        <end position="307"/>
    </location>
</feature>
<feature type="binding site" evidence="1">
    <location>
        <begin position="19"/>
        <end position="26"/>
    </location>
    <ligand>
        <name>ATP</name>
        <dbReference type="ChEBI" id="CHEBI:30616"/>
    </ligand>
</feature>
<feature type="binding site" evidence="1">
    <location>
        <begin position="70"/>
        <end position="73"/>
    </location>
    <ligand>
        <name>GTP</name>
        <dbReference type="ChEBI" id="CHEBI:37565"/>
    </ligand>
</feature>
<sequence>MQHEENEIVSKSELLVVTGMSGAGKSLVLQNLEDLGYFCVDNLPPILLPKFVELMEQGNPSLRKVAIAIDLRGQEFFKSLVKEVDLLRSQNRVIVDVMFVEASEAKLISRYKETRRAHPLNDNGQRSLIDAIEEERNSLTEIRSIANYVIDTTVLKPKELRAQINHLFNRNDIETFSISVTSFGFKHGIQQDADLVFDVRFLPNPFYVEALRPLTGVDDEVYQYVMKWQETAIFYDKLLDLLKFMIPGYKKEGKTQLVIAIGCTGGQHRSVALAKRLAEDLNESYDYNVYVHHRDAHIESGVENEKS</sequence>
<dbReference type="EMBL" id="AM295250">
    <property type="protein sequence ID" value="CAL27328.1"/>
    <property type="status" value="ALT_INIT"/>
    <property type="molecule type" value="Genomic_DNA"/>
</dbReference>
<dbReference type="RefSeq" id="WP_041613081.1">
    <property type="nucleotide sequence ID" value="NC_012121.1"/>
</dbReference>
<dbReference type="SMR" id="B9DJK9"/>
<dbReference type="GeneID" id="93795343"/>
<dbReference type="KEGG" id="sca:SCA_0414"/>
<dbReference type="eggNOG" id="COG1660">
    <property type="taxonomic scope" value="Bacteria"/>
</dbReference>
<dbReference type="HOGENOM" id="CLU_059558_0_0_9"/>
<dbReference type="OrthoDB" id="9784461at2"/>
<dbReference type="BioCyc" id="SCAR396513:SCA_RS02105-MONOMER"/>
<dbReference type="Proteomes" id="UP000000444">
    <property type="component" value="Chromosome"/>
</dbReference>
<dbReference type="GO" id="GO:0005524">
    <property type="term" value="F:ATP binding"/>
    <property type="evidence" value="ECO:0007669"/>
    <property type="project" value="UniProtKB-UniRule"/>
</dbReference>
<dbReference type="GO" id="GO:0005525">
    <property type="term" value="F:GTP binding"/>
    <property type="evidence" value="ECO:0007669"/>
    <property type="project" value="UniProtKB-UniRule"/>
</dbReference>
<dbReference type="Gene3D" id="3.40.50.300">
    <property type="entry name" value="P-loop containing nucleotide triphosphate hydrolases"/>
    <property type="match status" value="1"/>
</dbReference>
<dbReference type="HAMAP" id="MF_00636">
    <property type="entry name" value="RapZ_like"/>
    <property type="match status" value="1"/>
</dbReference>
<dbReference type="InterPro" id="IPR027417">
    <property type="entry name" value="P-loop_NTPase"/>
</dbReference>
<dbReference type="InterPro" id="IPR005337">
    <property type="entry name" value="RapZ-like"/>
</dbReference>
<dbReference type="InterPro" id="IPR053930">
    <property type="entry name" value="RapZ-like_N"/>
</dbReference>
<dbReference type="InterPro" id="IPR053931">
    <property type="entry name" value="RapZ_C"/>
</dbReference>
<dbReference type="NCBIfam" id="NF003828">
    <property type="entry name" value="PRK05416.1"/>
    <property type="match status" value="1"/>
</dbReference>
<dbReference type="PANTHER" id="PTHR30448">
    <property type="entry name" value="RNASE ADAPTER PROTEIN RAPZ"/>
    <property type="match status" value="1"/>
</dbReference>
<dbReference type="PANTHER" id="PTHR30448:SF0">
    <property type="entry name" value="RNASE ADAPTER PROTEIN RAPZ"/>
    <property type="match status" value="1"/>
</dbReference>
<dbReference type="Pfam" id="PF22740">
    <property type="entry name" value="PapZ_C"/>
    <property type="match status" value="1"/>
</dbReference>
<dbReference type="Pfam" id="PF03668">
    <property type="entry name" value="RapZ-like_N"/>
    <property type="match status" value="1"/>
</dbReference>
<dbReference type="PIRSF" id="PIRSF005052">
    <property type="entry name" value="P-loopkin"/>
    <property type="match status" value="1"/>
</dbReference>
<dbReference type="SUPFAM" id="SSF52540">
    <property type="entry name" value="P-loop containing nucleoside triphosphate hydrolases"/>
    <property type="match status" value="1"/>
</dbReference>
<organism>
    <name type="scientific">Staphylococcus carnosus (strain TM300)</name>
    <dbReference type="NCBI Taxonomy" id="396513"/>
    <lineage>
        <taxon>Bacteria</taxon>
        <taxon>Bacillati</taxon>
        <taxon>Bacillota</taxon>
        <taxon>Bacilli</taxon>
        <taxon>Bacillales</taxon>
        <taxon>Staphylococcaceae</taxon>
        <taxon>Staphylococcus</taxon>
    </lineage>
</organism>
<accession>B9DJK9</accession>
<reference key="1">
    <citation type="journal article" date="2009" name="Appl. Environ. Microbiol.">
        <title>Genome analysis of the meat starter culture bacterium Staphylococcus carnosus TM300.</title>
        <authorList>
            <person name="Rosenstein R."/>
            <person name="Nerz C."/>
            <person name="Biswas L."/>
            <person name="Resch A."/>
            <person name="Raddatz G."/>
            <person name="Schuster S.C."/>
            <person name="Goetz F."/>
        </authorList>
    </citation>
    <scope>NUCLEOTIDE SEQUENCE [LARGE SCALE GENOMIC DNA]</scope>
    <source>
        <strain>TM300</strain>
    </source>
</reference>
<proteinExistence type="inferred from homology"/>
<name>Y414_STACT</name>
<keyword id="KW-0067">ATP-binding</keyword>
<keyword id="KW-0342">GTP-binding</keyword>
<keyword id="KW-0547">Nucleotide-binding</keyword>
<keyword id="KW-1185">Reference proteome</keyword>
<comment type="function">
    <text evidence="1">Displays ATPase and GTPase activities.</text>
</comment>
<comment type="similarity">
    <text evidence="1">Belongs to the RapZ-like family.</text>
</comment>
<comment type="sequence caution" evidence="2">
    <conflict type="erroneous initiation">
        <sequence resource="EMBL-CDS" id="CAL27328"/>
    </conflict>
</comment>